<reference key="1">
    <citation type="journal article" date="2011" name="J. Bacteriol.">
        <title>Comparative genomics of 28 Salmonella enterica isolates: evidence for CRISPR-mediated adaptive sublineage evolution.</title>
        <authorList>
            <person name="Fricke W.F."/>
            <person name="Mammel M.K."/>
            <person name="McDermott P.F."/>
            <person name="Tartera C."/>
            <person name="White D.G."/>
            <person name="Leclerc J.E."/>
            <person name="Ravel J."/>
            <person name="Cebula T.A."/>
        </authorList>
    </citation>
    <scope>NUCLEOTIDE SEQUENCE [LARGE SCALE GENOMIC DNA]</scope>
    <source>
        <strain>SL483</strain>
    </source>
</reference>
<accession>B5F446</accession>
<keyword id="KW-0665">Pyrimidine biosynthesis</keyword>
<keyword id="KW-0808">Transferase</keyword>
<name>PYRB_SALA4</name>
<feature type="chain" id="PRO_1000088794" description="Aspartate carbamoyltransferase catalytic subunit">
    <location>
        <begin position="1"/>
        <end position="311"/>
    </location>
</feature>
<feature type="binding site" evidence="1">
    <location>
        <position position="55"/>
    </location>
    <ligand>
        <name>carbamoyl phosphate</name>
        <dbReference type="ChEBI" id="CHEBI:58228"/>
    </ligand>
</feature>
<feature type="binding site" evidence="1">
    <location>
        <position position="56"/>
    </location>
    <ligand>
        <name>carbamoyl phosphate</name>
        <dbReference type="ChEBI" id="CHEBI:58228"/>
    </ligand>
</feature>
<feature type="binding site" evidence="1">
    <location>
        <position position="85"/>
    </location>
    <ligand>
        <name>L-aspartate</name>
        <dbReference type="ChEBI" id="CHEBI:29991"/>
    </ligand>
</feature>
<feature type="binding site" evidence="1">
    <location>
        <position position="106"/>
    </location>
    <ligand>
        <name>carbamoyl phosphate</name>
        <dbReference type="ChEBI" id="CHEBI:58228"/>
    </ligand>
</feature>
<feature type="binding site" evidence="1">
    <location>
        <position position="135"/>
    </location>
    <ligand>
        <name>carbamoyl phosphate</name>
        <dbReference type="ChEBI" id="CHEBI:58228"/>
    </ligand>
</feature>
<feature type="binding site" evidence="1">
    <location>
        <position position="138"/>
    </location>
    <ligand>
        <name>carbamoyl phosphate</name>
        <dbReference type="ChEBI" id="CHEBI:58228"/>
    </ligand>
</feature>
<feature type="binding site" evidence="1">
    <location>
        <position position="168"/>
    </location>
    <ligand>
        <name>L-aspartate</name>
        <dbReference type="ChEBI" id="CHEBI:29991"/>
    </ligand>
</feature>
<feature type="binding site" evidence="1">
    <location>
        <position position="230"/>
    </location>
    <ligand>
        <name>L-aspartate</name>
        <dbReference type="ChEBI" id="CHEBI:29991"/>
    </ligand>
</feature>
<feature type="binding site" evidence="1">
    <location>
        <position position="268"/>
    </location>
    <ligand>
        <name>carbamoyl phosphate</name>
        <dbReference type="ChEBI" id="CHEBI:58228"/>
    </ligand>
</feature>
<feature type="binding site" evidence="1">
    <location>
        <position position="269"/>
    </location>
    <ligand>
        <name>carbamoyl phosphate</name>
        <dbReference type="ChEBI" id="CHEBI:58228"/>
    </ligand>
</feature>
<proteinExistence type="inferred from homology"/>
<dbReference type="EC" id="2.1.3.2" evidence="1"/>
<dbReference type="EMBL" id="CP001138">
    <property type="protein sequence ID" value="ACH49724.1"/>
    <property type="molecule type" value="Genomic_DNA"/>
</dbReference>
<dbReference type="RefSeq" id="WP_000013055.1">
    <property type="nucleotide sequence ID" value="NC_011149.1"/>
</dbReference>
<dbReference type="SMR" id="B5F446"/>
<dbReference type="KEGG" id="sea:SeAg_B4744"/>
<dbReference type="HOGENOM" id="CLU_043846_1_2_6"/>
<dbReference type="UniPathway" id="UPA00070">
    <property type="reaction ID" value="UER00116"/>
</dbReference>
<dbReference type="Proteomes" id="UP000008819">
    <property type="component" value="Chromosome"/>
</dbReference>
<dbReference type="GO" id="GO:0005829">
    <property type="term" value="C:cytosol"/>
    <property type="evidence" value="ECO:0007669"/>
    <property type="project" value="TreeGrafter"/>
</dbReference>
<dbReference type="GO" id="GO:0016597">
    <property type="term" value="F:amino acid binding"/>
    <property type="evidence" value="ECO:0007669"/>
    <property type="project" value="InterPro"/>
</dbReference>
<dbReference type="GO" id="GO:0004070">
    <property type="term" value="F:aspartate carbamoyltransferase activity"/>
    <property type="evidence" value="ECO:0007669"/>
    <property type="project" value="UniProtKB-UniRule"/>
</dbReference>
<dbReference type="GO" id="GO:0006207">
    <property type="term" value="P:'de novo' pyrimidine nucleobase biosynthetic process"/>
    <property type="evidence" value="ECO:0007669"/>
    <property type="project" value="InterPro"/>
</dbReference>
<dbReference type="GO" id="GO:0044205">
    <property type="term" value="P:'de novo' UMP biosynthetic process"/>
    <property type="evidence" value="ECO:0007669"/>
    <property type="project" value="UniProtKB-UniRule"/>
</dbReference>
<dbReference type="GO" id="GO:0006520">
    <property type="term" value="P:amino acid metabolic process"/>
    <property type="evidence" value="ECO:0007669"/>
    <property type="project" value="InterPro"/>
</dbReference>
<dbReference type="FunFam" id="3.40.50.1370:FF:000001">
    <property type="entry name" value="Aspartate carbamoyltransferase"/>
    <property type="match status" value="1"/>
</dbReference>
<dbReference type="FunFam" id="3.40.50.1370:FF:000002">
    <property type="entry name" value="Aspartate carbamoyltransferase 2"/>
    <property type="match status" value="1"/>
</dbReference>
<dbReference type="Gene3D" id="3.40.50.1370">
    <property type="entry name" value="Aspartate/ornithine carbamoyltransferase"/>
    <property type="match status" value="2"/>
</dbReference>
<dbReference type="HAMAP" id="MF_00001">
    <property type="entry name" value="Asp_carb_tr"/>
    <property type="match status" value="1"/>
</dbReference>
<dbReference type="InterPro" id="IPR006132">
    <property type="entry name" value="Asp/Orn_carbamoyltranf_P-bd"/>
</dbReference>
<dbReference type="InterPro" id="IPR006130">
    <property type="entry name" value="Asp/Orn_carbamoylTrfase"/>
</dbReference>
<dbReference type="InterPro" id="IPR036901">
    <property type="entry name" value="Asp/Orn_carbamoylTrfase_sf"/>
</dbReference>
<dbReference type="InterPro" id="IPR002082">
    <property type="entry name" value="Asp_carbamoyltransf"/>
</dbReference>
<dbReference type="InterPro" id="IPR006131">
    <property type="entry name" value="Asp_carbamoyltransf_Asp/Orn-bd"/>
</dbReference>
<dbReference type="NCBIfam" id="TIGR00670">
    <property type="entry name" value="asp_carb_tr"/>
    <property type="match status" value="1"/>
</dbReference>
<dbReference type="NCBIfam" id="NF002032">
    <property type="entry name" value="PRK00856.1"/>
    <property type="match status" value="1"/>
</dbReference>
<dbReference type="PANTHER" id="PTHR45753:SF6">
    <property type="entry name" value="ASPARTATE CARBAMOYLTRANSFERASE"/>
    <property type="match status" value="1"/>
</dbReference>
<dbReference type="PANTHER" id="PTHR45753">
    <property type="entry name" value="ORNITHINE CARBAMOYLTRANSFERASE, MITOCHONDRIAL"/>
    <property type="match status" value="1"/>
</dbReference>
<dbReference type="Pfam" id="PF00185">
    <property type="entry name" value="OTCace"/>
    <property type="match status" value="1"/>
</dbReference>
<dbReference type="Pfam" id="PF02729">
    <property type="entry name" value="OTCace_N"/>
    <property type="match status" value="1"/>
</dbReference>
<dbReference type="PRINTS" id="PR00100">
    <property type="entry name" value="AOTCASE"/>
</dbReference>
<dbReference type="PRINTS" id="PR00101">
    <property type="entry name" value="ATCASE"/>
</dbReference>
<dbReference type="SUPFAM" id="SSF53671">
    <property type="entry name" value="Aspartate/ornithine carbamoyltransferase"/>
    <property type="match status" value="1"/>
</dbReference>
<dbReference type="PROSITE" id="PS00097">
    <property type="entry name" value="CARBAMOYLTRANSFERASE"/>
    <property type="match status" value="1"/>
</dbReference>
<protein>
    <recommendedName>
        <fullName evidence="1">Aspartate carbamoyltransferase catalytic subunit</fullName>
        <ecNumber evidence="1">2.1.3.2</ecNumber>
    </recommendedName>
    <alternativeName>
        <fullName evidence="1">Aspartate transcarbamylase</fullName>
        <shortName evidence="1">ATCase</shortName>
    </alternativeName>
</protein>
<gene>
    <name evidence="1" type="primary">pyrB</name>
    <name type="ordered locus">SeAg_B4744</name>
</gene>
<evidence type="ECO:0000255" key="1">
    <source>
        <dbReference type="HAMAP-Rule" id="MF_00001"/>
    </source>
</evidence>
<sequence>MANPLYQKHIISINDLSRDDLNLVLATAAKLKANPQPELLKHKVIASCFFEASTRTRLSFETSMHRLGASVVGFSDSANTSLGKKGETLADTISVISTYVDAIVMRHPQEGAARLATEFSGQVPVLNAGDGSNQHPTQTLLDLFTIQETQGRLDNLHIAMVGDLKYGRTVHSLTQALAKFSGNRFYFIAPDALAMPQYILDMLDEKGMAWSLHGSIEEVMADVDILYMTRVQKERLDPSEYANVKAQFVLRASDLNGARENMKVLHPLPRIDEITTDVDKTPHAWYFQQAGNGIFARQALLALVLNSELSL</sequence>
<organism>
    <name type="scientific">Salmonella agona (strain SL483)</name>
    <dbReference type="NCBI Taxonomy" id="454166"/>
    <lineage>
        <taxon>Bacteria</taxon>
        <taxon>Pseudomonadati</taxon>
        <taxon>Pseudomonadota</taxon>
        <taxon>Gammaproteobacteria</taxon>
        <taxon>Enterobacterales</taxon>
        <taxon>Enterobacteriaceae</taxon>
        <taxon>Salmonella</taxon>
    </lineage>
</organism>
<comment type="function">
    <text evidence="1">Catalyzes the condensation of carbamoyl phosphate and aspartate to form carbamoyl aspartate and inorganic phosphate, the committed step in the de novo pyrimidine nucleotide biosynthesis pathway.</text>
</comment>
<comment type="catalytic activity">
    <reaction evidence="1">
        <text>carbamoyl phosphate + L-aspartate = N-carbamoyl-L-aspartate + phosphate + H(+)</text>
        <dbReference type="Rhea" id="RHEA:20013"/>
        <dbReference type="ChEBI" id="CHEBI:15378"/>
        <dbReference type="ChEBI" id="CHEBI:29991"/>
        <dbReference type="ChEBI" id="CHEBI:32814"/>
        <dbReference type="ChEBI" id="CHEBI:43474"/>
        <dbReference type="ChEBI" id="CHEBI:58228"/>
        <dbReference type="EC" id="2.1.3.2"/>
    </reaction>
</comment>
<comment type="pathway">
    <text evidence="1">Pyrimidine metabolism; UMP biosynthesis via de novo pathway; (S)-dihydroorotate from bicarbonate: step 2/3.</text>
</comment>
<comment type="subunit">
    <text evidence="1">Heterododecamer (2C3:3R2) of six catalytic PyrB chains organized as two trimers (C3), and six regulatory PyrI chains organized as three dimers (R2).</text>
</comment>
<comment type="similarity">
    <text evidence="1">Belongs to the aspartate/ornithine carbamoyltransferase superfamily. ATCase family.</text>
</comment>